<comment type="function">
    <text evidence="1">Probably phosphorylates lipids; the in vivo substrate is unknown.</text>
</comment>
<comment type="cofactor">
    <cofactor evidence="1">
        <name>Mg(2+)</name>
        <dbReference type="ChEBI" id="CHEBI:18420"/>
    </cofactor>
    <cofactor evidence="1">
        <name>Ca(2+)</name>
        <dbReference type="ChEBI" id="CHEBI:29108"/>
    </cofactor>
    <text evidence="1">Binds 1 Mg(2+) ion per subunit. Ca(2+) may be able to substitute.</text>
</comment>
<comment type="subcellular location">
    <subcellularLocation>
        <location evidence="1">Cytoplasm</location>
    </subcellularLocation>
</comment>
<comment type="similarity">
    <text evidence="1">Belongs to the diacylglycerol/lipid kinase family. YegS lipid kinase subfamily.</text>
</comment>
<protein>
    <recommendedName>
        <fullName evidence="1">Probable lipid kinase YegS-like</fullName>
        <ecNumber evidence="1">2.7.1.-</ecNumber>
    </recommendedName>
</protein>
<accession>Q02PI7</accession>
<keyword id="KW-0067">ATP-binding</keyword>
<keyword id="KW-0963">Cytoplasm</keyword>
<keyword id="KW-0418">Kinase</keyword>
<keyword id="KW-0444">Lipid biosynthesis</keyword>
<keyword id="KW-0443">Lipid metabolism</keyword>
<keyword id="KW-0460">Magnesium</keyword>
<keyword id="KW-0479">Metal-binding</keyword>
<keyword id="KW-0547">Nucleotide-binding</keyword>
<keyword id="KW-0594">Phospholipid biosynthesis</keyword>
<keyword id="KW-1208">Phospholipid metabolism</keyword>
<keyword id="KW-0808">Transferase</keyword>
<name>YEGS_PSEAB</name>
<evidence type="ECO:0000255" key="1">
    <source>
        <dbReference type="HAMAP-Rule" id="MF_01377"/>
    </source>
</evidence>
<gene>
    <name type="ordered locus">PA14_24970</name>
</gene>
<sequence length="302" mass="31431">MDKDKVLLVLHGKQAGNEEVRAAVAAQREAGRELAVRVTWEDGDARRIVEEALAAGFATLVAGGGDGTLREVAEALARGRGEASLAILPLGTANDFARAAGIPLEPAAALALLDQTARPIDLGAVNGKLFLNMATGGFGSKVTANTSEDLKKVLGGAAYLLTGLTRFSEVHAAQGRFSAPDFQWEGEFLALGIGNGRQAGGGHVLCPQARVDDGLLDVSILPTPQDMVGTLGTLLGGGNGVESLFVRARVPWLEVEAAEGLDVNLDGEPLEGRKLRFSVSPGALRVHLPAGSPLLREPPRED</sequence>
<organism>
    <name type="scientific">Pseudomonas aeruginosa (strain UCBPP-PA14)</name>
    <dbReference type="NCBI Taxonomy" id="208963"/>
    <lineage>
        <taxon>Bacteria</taxon>
        <taxon>Pseudomonadati</taxon>
        <taxon>Pseudomonadota</taxon>
        <taxon>Gammaproteobacteria</taxon>
        <taxon>Pseudomonadales</taxon>
        <taxon>Pseudomonadaceae</taxon>
        <taxon>Pseudomonas</taxon>
    </lineage>
</organism>
<dbReference type="EC" id="2.7.1.-" evidence="1"/>
<dbReference type="EMBL" id="CP000438">
    <property type="protein sequence ID" value="ABJ12260.1"/>
    <property type="molecule type" value="Genomic_DNA"/>
</dbReference>
<dbReference type="SMR" id="Q02PI7"/>
<dbReference type="KEGG" id="pau:PA14_24970"/>
<dbReference type="PseudoCAP" id="PA14_24970"/>
<dbReference type="HOGENOM" id="CLU_045532_1_1_6"/>
<dbReference type="BioCyc" id="PAER208963:G1G74-2083-MONOMER"/>
<dbReference type="Proteomes" id="UP000000653">
    <property type="component" value="Chromosome"/>
</dbReference>
<dbReference type="GO" id="GO:0005737">
    <property type="term" value="C:cytoplasm"/>
    <property type="evidence" value="ECO:0007669"/>
    <property type="project" value="UniProtKB-SubCell"/>
</dbReference>
<dbReference type="GO" id="GO:0005886">
    <property type="term" value="C:plasma membrane"/>
    <property type="evidence" value="ECO:0007669"/>
    <property type="project" value="TreeGrafter"/>
</dbReference>
<dbReference type="GO" id="GO:0005524">
    <property type="term" value="F:ATP binding"/>
    <property type="evidence" value="ECO:0007669"/>
    <property type="project" value="UniProtKB-UniRule"/>
</dbReference>
<dbReference type="GO" id="GO:0001727">
    <property type="term" value="F:lipid kinase activity"/>
    <property type="evidence" value="ECO:0007669"/>
    <property type="project" value="UniProtKB-UniRule"/>
</dbReference>
<dbReference type="GO" id="GO:0000287">
    <property type="term" value="F:magnesium ion binding"/>
    <property type="evidence" value="ECO:0007669"/>
    <property type="project" value="UniProtKB-UniRule"/>
</dbReference>
<dbReference type="GO" id="GO:0008654">
    <property type="term" value="P:phospholipid biosynthetic process"/>
    <property type="evidence" value="ECO:0007669"/>
    <property type="project" value="UniProtKB-UniRule"/>
</dbReference>
<dbReference type="Gene3D" id="2.60.200.40">
    <property type="match status" value="1"/>
</dbReference>
<dbReference type="Gene3D" id="3.40.50.10330">
    <property type="entry name" value="Probable inorganic polyphosphate/atp-NAD kinase, domain 1"/>
    <property type="match status" value="1"/>
</dbReference>
<dbReference type="HAMAP" id="MF_01377">
    <property type="entry name" value="YegS"/>
    <property type="match status" value="1"/>
</dbReference>
<dbReference type="InterPro" id="IPR017438">
    <property type="entry name" value="ATP-NAD_kinase_N"/>
</dbReference>
<dbReference type="InterPro" id="IPR005218">
    <property type="entry name" value="Diacylglycerol/lipid_kinase"/>
</dbReference>
<dbReference type="InterPro" id="IPR001206">
    <property type="entry name" value="Diacylglycerol_kinase_cat_dom"/>
</dbReference>
<dbReference type="InterPro" id="IPR022433">
    <property type="entry name" value="Lip_kinase_YegS"/>
</dbReference>
<dbReference type="InterPro" id="IPR050187">
    <property type="entry name" value="Lipid_Phosphate_FormReg"/>
</dbReference>
<dbReference type="InterPro" id="IPR016064">
    <property type="entry name" value="NAD/diacylglycerol_kinase_sf"/>
</dbReference>
<dbReference type="InterPro" id="IPR045540">
    <property type="entry name" value="YegS/DAGK_C"/>
</dbReference>
<dbReference type="NCBIfam" id="TIGR03702">
    <property type="entry name" value="lip_kinase_YegS"/>
    <property type="match status" value="1"/>
</dbReference>
<dbReference type="NCBIfam" id="NF009602">
    <property type="entry name" value="PRK13054.1"/>
    <property type="match status" value="1"/>
</dbReference>
<dbReference type="NCBIfam" id="TIGR00147">
    <property type="entry name" value="YegS/Rv2252/BmrU family lipid kinase"/>
    <property type="match status" value="1"/>
</dbReference>
<dbReference type="PANTHER" id="PTHR12358:SF106">
    <property type="entry name" value="LIPID KINASE YEGS"/>
    <property type="match status" value="1"/>
</dbReference>
<dbReference type="PANTHER" id="PTHR12358">
    <property type="entry name" value="SPHINGOSINE KINASE"/>
    <property type="match status" value="1"/>
</dbReference>
<dbReference type="Pfam" id="PF00781">
    <property type="entry name" value="DAGK_cat"/>
    <property type="match status" value="1"/>
</dbReference>
<dbReference type="Pfam" id="PF19279">
    <property type="entry name" value="YegS_C"/>
    <property type="match status" value="1"/>
</dbReference>
<dbReference type="SMART" id="SM00046">
    <property type="entry name" value="DAGKc"/>
    <property type="match status" value="1"/>
</dbReference>
<dbReference type="SUPFAM" id="SSF111331">
    <property type="entry name" value="NAD kinase/diacylglycerol kinase-like"/>
    <property type="match status" value="1"/>
</dbReference>
<dbReference type="PROSITE" id="PS50146">
    <property type="entry name" value="DAGK"/>
    <property type="match status" value="1"/>
</dbReference>
<feature type="chain" id="PRO_0000292148" description="Probable lipid kinase YegS-like">
    <location>
        <begin position="1"/>
        <end position="302"/>
    </location>
</feature>
<feature type="domain" description="DAGKc" evidence="1">
    <location>
        <begin position="1"/>
        <end position="129"/>
    </location>
</feature>
<feature type="active site" description="Proton acceptor" evidence="1">
    <location>
        <position position="268"/>
    </location>
</feature>
<feature type="binding site" evidence="1">
    <location>
        <position position="39"/>
    </location>
    <ligand>
        <name>ATP</name>
        <dbReference type="ChEBI" id="CHEBI:30616"/>
    </ligand>
</feature>
<feature type="binding site" evidence="1">
    <location>
        <begin position="65"/>
        <end position="71"/>
    </location>
    <ligand>
        <name>ATP</name>
        <dbReference type="ChEBI" id="CHEBI:30616"/>
    </ligand>
</feature>
<feature type="binding site" evidence="1">
    <location>
        <position position="92"/>
    </location>
    <ligand>
        <name>ATP</name>
        <dbReference type="ChEBI" id="CHEBI:30616"/>
    </ligand>
</feature>
<feature type="binding site" evidence="1">
    <location>
        <position position="210"/>
    </location>
    <ligand>
        <name>Mg(2+)</name>
        <dbReference type="ChEBI" id="CHEBI:18420"/>
    </ligand>
</feature>
<feature type="binding site" evidence="1">
    <location>
        <position position="213"/>
    </location>
    <ligand>
        <name>Mg(2+)</name>
        <dbReference type="ChEBI" id="CHEBI:18420"/>
    </ligand>
</feature>
<feature type="binding site" evidence="1">
    <location>
        <position position="215"/>
    </location>
    <ligand>
        <name>Mg(2+)</name>
        <dbReference type="ChEBI" id="CHEBI:18420"/>
    </ligand>
</feature>
<proteinExistence type="inferred from homology"/>
<reference key="1">
    <citation type="journal article" date="2006" name="Genome Biol.">
        <title>Genomic analysis reveals that Pseudomonas aeruginosa virulence is combinatorial.</title>
        <authorList>
            <person name="Lee D.G."/>
            <person name="Urbach J.M."/>
            <person name="Wu G."/>
            <person name="Liberati N.T."/>
            <person name="Feinbaum R.L."/>
            <person name="Miyata S."/>
            <person name="Diggins L.T."/>
            <person name="He J."/>
            <person name="Saucier M."/>
            <person name="Deziel E."/>
            <person name="Friedman L."/>
            <person name="Li L."/>
            <person name="Grills G."/>
            <person name="Montgomery K."/>
            <person name="Kucherlapati R."/>
            <person name="Rahme L.G."/>
            <person name="Ausubel F.M."/>
        </authorList>
    </citation>
    <scope>NUCLEOTIDE SEQUENCE [LARGE SCALE GENOMIC DNA]</scope>
    <source>
        <strain>UCBPP-PA14</strain>
    </source>
</reference>